<comment type="function">
    <text evidence="4 5">Catalyzes its autophosphorylation, which is needed for enzymatic activity and phosphorylates myosin II heavy chain at a threonine in the C-terminal tail region (PubMed:7822274). This phosphorylation is critical for regulating the assembly and disassembly of myosin II filament, affecting myosin localization during an array of cellular contractile events, including cytokinesis and capping of cell surface receptors as well as chemotactic cell locomotion (PubMed:7822274).</text>
</comment>
<comment type="catalytic activity">
    <reaction evidence="4">
        <text>L-threonyl-[myosin heavy-chain] + ATP = O-phospho-L-threonyl-[myosin heavy-chain] + ADP + H(+)</text>
        <dbReference type="Rhea" id="RHEA:11424"/>
        <dbReference type="Rhea" id="RHEA-COMP:13718"/>
        <dbReference type="Rhea" id="RHEA-COMP:13719"/>
        <dbReference type="ChEBI" id="CHEBI:15378"/>
        <dbReference type="ChEBI" id="CHEBI:30013"/>
        <dbReference type="ChEBI" id="CHEBI:30616"/>
        <dbReference type="ChEBI" id="CHEBI:61977"/>
        <dbReference type="ChEBI" id="CHEBI:456216"/>
        <dbReference type="EC" id="2.7.11.7"/>
    </reaction>
    <physiologicalReaction direction="left-to-right" evidence="4">
        <dbReference type="Rhea" id="RHEA:11425"/>
    </physiologicalReaction>
</comment>
<comment type="cofactor">
    <cofactor>
        <name>Mg(2+)</name>
        <dbReference type="ChEBI" id="CHEBI:18420"/>
    </cofactor>
    <cofactor>
        <name>Mn(2+)</name>
        <dbReference type="ChEBI" id="CHEBI:29035"/>
    </cofactor>
</comment>
<comment type="subunit">
    <text>Oligomer.</text>
</comment>
<comment type="PTM">
    <text>The N-terminus is blocked.</text>
</comment>
<comment type="similarity">
    <text evidence="6">Belongs to the protein kinase superfamily. Alpha-type protein kinase family. ALPK subfamily.</text>
</comment>
<name>MHCKA_DICDI</name>
<evidence type="ECO:0000255" key="1"/>
<evidence type="ECO:0000255" key="2">
    <source>
        <dbReference type="PROSITE-ProRule" id="PRU00501"/>
    </source>
</evidence>
<evidence type="ECO:0000256" key="3">
    <source>
        <dbReference type="SAM" id="MobiDB-lite"/>
    </source>
</evidence>
<evidence type="ECO:0000269" key="4">
    <source>
    </source>
</evidence>
<evidence type="ECO:0000303" key="5">
    <source>
    </source>
</evidence>
<evidence type="ECO:0000305" key="6"/>
<evidence type="ECO:0007829" key="7">
    <source>
        <dbReference type="PDB" id="3LKM"/>
    </source>
</evidence>
<evidence type="ECO:0007829" key="8">
    <source>
        <dbReference type="PDB" id="4ZME"/>
    </source>
</evidence>
<evidence type="ECO:0007829" key="9">
    <source>
        <dbReference type="PDB" id="5DYJ"/>
    </source>
</evidence>
<evidence type="ECO:0007829" key="10">
    <source>
        <dbReference type="PDB" id="5E4H"/>
    </source>
</evidence>
<sequence>MFNIKKRKESITGIPPINVNSPQSVPLSGTLQSPLITPNSPNFVSRQCPFKKFGCSSFLVSKAEFDNHLKDDAQFHLQLAVEKFDHQFDLHTQLMAHFTEQMEDQLEKTMKVVRNHTDSLGGNVQTKLDEGIEKCMAFAKKVEQQQQQLAKRLITQQIQEKKSTSSPLVKGGISGGGGSGGDDSFDGANISSMSTSKQELQQELQSLSIKMKKELTELSDELSQKLERSTGNIDIKIKRIEGEVNEKIDKRQLVSTIDDSIGKKTDSIGYTLESSIIKKVEEKEKKKSEQNQLLFDSKIESLKDKIKIIETQQLDTSSEVRKLKLESTSSGNLMAGLNGTSGRPSSSSHFIPSSVSAAANNINKNEIMEEVKKVEEKLQKKIREEIDNTKSELSKVERSVKDNRSEIEGLEKDCKNQFDKQDNKIKQVEDDLKKSDSLLLLMQNNLKKYNEFVDRERDRESERLKLQDSIKRLEQNQKKIEAEIQEGNEQVERVLREEASISPISSVPKSPITTKRSSIILNSPPMTSQQSSPKIQDLLSSSGSSSVSGINISSETGEMGILWEFDPIINKWIRLSMKLKVERKPFAEGALREAYHTVSLGVGTDENYPLGTTTKLFPPIEMISPISKNNEAMTQLKNGTKFVLKLYKKEAEQQASRELYFEDVKMQMVCRDWGNKFNQKKPPKKIEFLMSWVVELIDRSPSSNGQPILCSIEPLLVGEFKKNNSNYGAVLTNRSTPQAFSHFTYELSNKQMIVVDIQGVDDLYTDPQIHTPDGKGFGLGNLGKAGINKFITTHKCNAVCALLDLDVKLGGVLSGNNKKQLQQGTMVMPDILPELMPSDNTIKVGAKQLPKAEFSKKDLKCVSTIQSFRERVNSIAFFDNQKLLCAGYGDGTYRVFDVNDNWKCLYTVNGHRKSIESIACNSNYIFTSSPDNTIKVHIIRSGNTKCIETLVGHTGEVNCVVANEKYLFSCSYDKTIKVWDLSTFKEIKSFEGVHTKYIKTLALSGRYLFSGGNDQIIYVWDTETLSMLFNMQGHEDWVLSLHCTASYLFSTSKDNVIKIWDLSNFSCIDTLKGHWNSVSSCVVKDRYLYSGSEDNSIKVWDLDTLECVYTIPKSHSLGVKCLMVFNNQIISAAFDGSIKVWEWQSK</sequence>
<feature type="chain" id="PRO_0000051047" description="Myosin heavy chain kinase A">
    <location>
        <begin position="1"/>
        <end position="1146"/>
    </location>
</feature>
<feature type="domain" description="Alpha-type protein kinase" evidence="2">
    <location>
        <begin position="564"/>
        <end position="808"/>
    </location>
</feature>
<feature type="repeat" description="WD 1">
    <location>
        <begin position="867"/>
        <end position="897"/>
    </location>
</feature>
<feature type="repeat" description="WD 2">
    <location>
        <begin position="910"/>
        <end position="938"/>
    </location>
</feature>
<feature type="repeat" description="WD 3">
    <location>
        <begin position="952"/>
        <end position="980"/>
    </location>
</feature>
<feature type="repeat" description="WD 4">
    <location>
        <begin position="993"/>
        <end position="1021"/>
    </location>
</feature>
<feature type="repeat" description="WD 5">
    <location>
        <begin position="1033"/>
        <end position="1061"/>
    </location>
</feature>
<feature type="repeat" description="WD 6">
    <location>
        <begin position="1073"/>
        <end position="1101"/>
    </location>
</feature>
<feature type="repeat" description="WD 7">
    <location>
        <begin position="1114"/>
        <end position="1142"/>
    </location>
</feature>
<feature type="region of interest" description="Disordered" evidence="3">
    <location>
        <begin position="1"/>
        <end position="25"/>
    </location>
</feature>
<feature type="region of interest" description="Disordered" evidence="3">
    <location>
        <begin position="158"/>
        <end position="191"/>
    </location>
</feature>
<feature type="region of interest" description="Pseudosubstrate/autoinhibitory domain" evidence="1">
    <location>
        <begin position="500"/>
        <end position="551"/>
    </location>
</feature>
<feature type="region of interest" description="Disordered" evidence="3">
    <location>
        <begin position="521"/>
        <end position="540"/>
    </location>
</feature>
<feature type="region of interest" description="Catalytic">
    <location>
        <begin position="552"/>
        <end position="852"/>
    </location>
</feature>
<feature type="coiled-coil region" evidence="1">
    <location>
        <begin position="100"/>
        <end position="120"/>
    </location>
</feature>
<feature type="coiled-coil region" evidence="1">
    <location>
        <begin position="187"/>
        <end position="241"/>
    </location>
</feature>
<feature type="coiled-coil region" evidence="1">
    <location>
        <begin position="297"/>
        <end position="502"/>
    </location>
</feature>
<feature type="compositionally biased region" description="Gly residues" evidence="3">
    <location>
        <begin position="172"/>
        <end position="181"/>
    </location>
</feature>
<feature type="compositionally biased region" description="Polar residues" evidence="3">
    <location>
        <begin position="521"/>
        <end position="534"/>
    </location>
</feature>
<feature type="binding site" evidence="1">
    <location>
        <begin position="778"/>
        <end position="783"/>
    </location>
    <ligand>
        <name>ATP</name>
        <dbReference type="ChEBI" id="CHEBI:30616"/>
    </ligand>
</feature>
<feature type="sequence conflict" description="In Ref. 1; AAA66070." evidence="6" ref="1">
    <original>S</original>
    <variation>A</variation>
    <location>
        <position position="391"/>
    </location>
</feature>
<feature type="strand" evidence="8">
    <location>
        <begin position="554"/>
        <end position="556"/>
    </location>
</feature>
<feature type="strand" evidence="7">
    <location>
        <begin position="558"/>
        <end position="566"/>
    </location>
</feature>
<feature type="turn" evidence="7">
    <location>
        <begin position="567"/>
        <end position="570"/>
    </location>
</feature>
<feature type="strand" evidence="7">
    <location>
        <begin position="571"/>
        <end position="581"/>
    </location>
</feature>
<feature type="strand" evidence="7">
    <location>
        <begin position="586"/>
        <end position="588"/>
    </location>
</feature>
<feature type="strand" evidence="7">
    <location>
        <begin position="590"/>
        <end position="605"/>
    </location>
</feature>
<feature type="strand" evidence="10">
    <location>
        <begin position="614"/>
        <end position="618"/>
    </location>
</feature>
<feature type="helix" evidence="7">
    <location>
        <begin position="620"/>
        <end position="622"/>
    </location>
</feature>
<feature type="strand" evidence="10">
    <location>
        <begin position="623"/>
        <end position="625"/>
    </location>
</feature>
<feature type="helix" evidence="7">
    <location>
        <begin position="632"/>
        <end position="635"/>
    </location>
</feature>
<feature type="strand" evidence="7">
    <location>
        <begin position="641"/>
        <end position="647"/>
    </location>
</feature>
<feature type="strand" evidence="9">
    <location>
        <begin position="649"/>
        <end position="651"/>
    </location>
</feature>
<feature type="helix" evidence="9">
    <location>
        <begin position="652"/>
        <end position="654"/>
    </location>
</feature>
<feature type="helix" evidence="7">
    <location>
        <begin position="657"/>
        <end position="679"/>
    </location>
</feature>
<feature type="strand" evidence="7">
    <location>
        <begin position="692"/>
        <end position="695"/>
    </location>
</feature>
<feature type="strand" evidence="7">
    <location>
        <begin position="703"/>
        <end position="705"/>
    </location>
</feature>
<feature type="strand" evidence="7">
    <location>
        <begin position="709"/>
        <end position="714"/>
    </location>
</feature>
<feature type="strand" evidence="7">
    <location>
        <begin position="720"/>
        <end position="722"/>
    </location>
</feature>
<feature type="strand" evidence="7">
    <location>
        <begin position="726"/>
        <end position="728"/>
    </location>
</feature>
<feature type="helix" evidence="7">
    <location>
        <begin position="735"/>
        <end position="747"/>
    </location>
</feature>
<feature type="turn" evidence="7">
    <location>
        <begin position="748"/>
        <end position="750"/>
    </location>
</feature>
<feature type="strand" evidence="7">
    <location>
        <begin position="753"/>
        <end position="755"/>
    </location>
</feature>
<feature type="strand" evidence="7">
    <location>
        <begin position="758"/>
        <end position="760"/>
    </location>
</feature>
<feature type="strand" evidence="8">
    <location>
        <begin position="763"/>
        <end position="765"/>
    </location>
</feature>
<feature type="strand" evidence="7">
    <location>
        <begin position="768"/>
        <end position="770"/>
    </location>
</feature>
<feature type="helix" evidence="7">
    <location>
        <begin position="783"/>
        <end position="793"/>
    </location>
</feature>
<feature type="helix" evidence="7">
    <location>
        <begin position="798"/>
        <end position="802"/>
    </location>
</feature>
<organism>
    <name type="scientific">Dictyostelium discoideum</name>
    <name type="common">Social amoeba</name>
    <dbReference type="NCBI Taxonomy" id="44689"/>
    <lineage>
        <taxon>Eukaryota</taxon>
        <taxon>Amoebozoa</taxon>
        <taxon>Evosea</taxon>
        <taxon>Eumycetozoa</taxon>
        <taxon>Dictyostelia</taxon>
        <taxon>Dictyosteliales</taxon>
        <taxon>Dictyosteliaceae</taxon>
        <taxon>Dictyostelium</taxon>
    </lineage>
</organism>
<gene>
    <name type="primary">mhkA</name>
    <name type="synonym">mhckA</name>
    <name type="ORF">DDB_G0291231</name>
</gene>
<proteinExistence type="evidence at protein level"/>
<dbReference type="EC" id="2.7.11.7" evidence="4"/>
<dbReference type="EMBL" id="U16856">
    <property type="protein sequence ID" value="AAA66070.1"/>
    <property type="molecule type" value="mRNA"/>
</dbReference>
<dbReference type="EMBL" id="AAFI02000177">
    <property type="protein sequence ID" value="EAL61599.1"/>
    <property type="molecule type" value="Genomic_DNA"/>
</dbReference>
<dbReference type="PIR" id="A55532">
    <property type="entry name" value="A55532"/>
</dbReference>
<dbReference type="RefSeq" id="XP_635119.1">
    <property type="nucleotide sequence ID" value="XM_630027.1"/>
</dbReference>
<dbReference type="PDB" id="3LKM">
    <property type="method" value="X-ray"/>
    <property type="resolution" value="1.60 A"/>
    <property type="chains" value="A=552-841"/>
</dbReference>
<dbReference type="PDB" id="3LLA">
    <property type="method" value="X-ray"/>
    <property type="resolution" value="2.11 A"/>
    <property type="chains" value="A/B=552-841"/>
</dbReference>
<dbReference type="PDB" id="3LMH">
    <property type="method" value="X-ray"/>
    <property type="resolution" value="2.00 A"/>
    <property type="chains" value="A/B=552-841"/>
</dbReference>
<dbReference type="PDB" id="3LMI">
    <property type="method" value="X-ray"/>
    <property type="resolution" value="2.20 A"/>
    <property type="chains" value="A/B/C/D=552-841"/>
</dbReference>
<dbReference type="PDB" id="3PDT">
    <property type="method" value="X-ray"/>
    <property type="resolution" value="1.80 A"/>
    <property type="chains" value="A=552-809"/>
</dbReference>
<dbReference type="PDB" id="4ZME">
    <property type="method" value="X-ray"/>
    <property type="resolution" value="1.98 A"/>
    <property type="chains" value="A/B=552-841"/>
</dbReference>
<dbReference type="PDB" id="4ZMF">
    <property type="method" value="X-ray"/>
    <property type="resolution" value="2.39 A"/>
    <property type="chains" value="A/B=552-841"/>
</dbReference>
<dbReference type="PDB" id="4ZS4">
    <property type="method" value="X-ray"/>
    <property type="resolution" value="2.40 A"/>
    <property type="chains" value="A/B=552-841"/>
</dbReference>
<dbReference type="PDB" id="5DYJ">
    <property type="method" value="X-ray"/>
    <property type="resolution" value="2.50 A"/>
    <property type="chains" value="A/B=552-841"/>
</dbReference>
<dbReference type="PDB" id="5E4H">
    <property type="method" value="X-ray"/>
    <property type="resolution" value="2.90 A"/>
    <property type="chains" value="A/B/C/D/E/F/G/H=552-841"/>
</dbReference>
<dbReference type="PDB" id="5E9E">
    <property type="method" value="X-ray"/>
    <property type="resolution" value="2.40 A"/>
    <property type="chains" value="A/B=552-841"/>
</dbReference>
<dbReference type="PDBsum" id="3LKM"/>
<dbReference type="PDBsum" id="3LLA"/>
<dbReference type="PDBsum" id="3LMH"/>
<dbReference type="PDBsum" id="3LMI"/>
<dbReference type="PDBsum" id="3PDT"/>
<dbReference type="PDBsum" id="4ZME"/>
<dbReference type="PDBsum" id="4ZMF"/>
<dbReference type="PDBsum" id="4ZS4"/>
<dbReference type="PDBsum" id="5DYJ"/>
<dbReference type="PDBsum" id="5E4H"/>
<dbReference type="PDBsum" id="5E9E"/>
<dbReference type="SMR" id="P42527"/>
<dbReference type="FunCoup" id="P42527">
    <property type="interactions" value="522"/>
</dbReference>
<dbReference type="STRING" id="44689.P42527"/>
<dbReference type="PaxDb" id="44689-DDB0216274"/>
<dbReference type="EnsemblProtists" id="EAL61599">
    <property type="protein sequence ID" value="EAL61599"/>
    <property type="gene ID" value="DDB_G0291231"/>
</dbReference>
<dbReference type="GeneID" id="8628066"/>
<dbReference type="KEGG" id="ddi:DDB_G0291231"/>
<dbReference type="dictyBase" id="DDB_G0291231">
    <property type="gene designation" value="mhkA"/>
</dbReference>
<dbReference type="VEuPathDB" id="AmoebaDB:DDB_G0291231"/>
<dbReference type="eggNOG" id="KOG0274">
    <property type="taxonomic scope" value="Eukaryota"/>
</dbReference>
<dbReference type="HOGENOM" id="CLU_277130_0_0_1"/>
<dbReference type="InParanoid" id="P42527"/>
<dbReference type="OMA" id="ITTHKCN"/>
<dbReference type="PhylomeDB" id="P42527"/>
<dbReference type="BRENDA" id="2.7.11.7">
    <property type="organism ID" value="1939"/>
</dbReference>
<dbReference type="EvolutionaryTrace" id="P42527"/>
<dbReference type="PRO" id="PR:P42527"/>
<dbReference type="Proteomes" id="UP000002195">
    <property type="component" value="Chromosome 6"/>
</dbReference>
<dbReference type="GO" id="GO:0005826">
    <property type="term" value="C:actomyosin contractile ring"/>
    <property type="evidence" value="ECO:0000318"/>
    <property type="project" value="GO_Central"/>
</dbReference>
<dbReference type="GO" id="GO:0005938">
    <property type="term" value="C:cell cortex"/>
    <property type="evidence" value="ECO:0000314"/>
    <property type="project" value="dictyBase"/>
</dbReference>
<dbReference type="GO" id="GO:0005737">
    <property type="term" value="C:cytoplasm"/>
    <property type="evidence" value="ECO:0000314"/>
    <property type="project" value="dictyBase"/>
</dbReference>
<dbReference type="GO" id="GO:0051015">
    <property type="term" value="F:actin filament binding"/>
    <property type="evidence" value="ECO:0000314"/>
    <property type="project" value="dictyBase"/>
</dbReference>
<dbReference type="GO" id="GO:0043531">
    <property type="term" value="F:ADP binding"/>
    <property type="evidence" value="ECO:0000314"/>
    <property type="project" value="dictyBase"/>
</dbReference>
<dbReference type="GO" id="GO:0043262">
    <property type="term" value="F:ADP phosphatase activity"/>
    <property type="evidence" value="ECO:0000314"/>
    <property type="project" value="dictyBase"/>
</dbReference>
<dbReference type="GO" id="GO:0016208">
    <property type="term" value="F:AMP binding"/>
    <property type="evidence" value="ECO:0000314"/>
    <property type="project" value="dictyBase"/>
</dbReference>
<dbReference type="GO" id="GO:0005524">
    <property type="term" value="F:ATP binding"/>
    <property type="evidence" value="ECO:0000314"/>
    <property type="project" value="dictyBase"/>
</dbReference>
<dbReference type="GO" id="GO:0030552">
    <property type="term" value="F:cAMP binding"/>
    <property type="evidence" value="ECO:0000314"/>
    <property type="project" value="dictyBase"/>
</dbReference>
<dbReference type="GO" id="GO:0042802">
    <property type="term" value="F:identical protein binding"/>
    <property type="evidence" value="ECO:0000353"/>
    <property type="project" value="dictyBase"/>
</dbReference>
<dbReference type="GO" id="GO:0016905">
    <property type="term" value="F:myosin heavy chain kinase activity"/>
    <property type="evidence" value="ECO:0000314"/>
    <property type="project" value="dictyBase"/>
</dbReference>
<dbReference type="GO" id="GO:0045159">
    <property type="term" value="F:myosin II binding"/>
    <property type="evidence" value="ECO:0000353"/>
    <property type="project" value="dictyBase"/>
</dbReference>
<dbReference type="GO" id="GO:0004672">
    <property type="term" value="F:protein kinase activity"/>
    <property type="evidence" value="ECO:0000314"/>
    <property type="project" value="dictyBase"/>
</dbReference>
<dbReference type="GO" id="GO:0004674">
    <property type="term" value="F:protein serine/threonine kinase activity"/>
    <property type="evidence" value="ECO:0000314"/>
    <property type="project" value="dictyBase"/>
</dbReference>
<dbReference type="GO" id="GO:0051764">
    <property type="term" value="P:actin crosslink formation"/>
    <property type="evidence" value="ECO:0000314"/>
    <property type="project" value="dictyBase"/>
</dbReference>
<dbReference type="GO" id="GO:0051017">
    <property type="term" value="P:actin filament bundle assembly"/>
    <property type="evidence" value="ECO:0000314"/>
    <property type="project" value="dictyBase"/>
</dbReference>
<dbReference type="GO" id="GO:0006935">
    <property type="term" value="P:chemotaxis"/>
    <property type="evidence" value="ECO:0000315"/>
    <property type="project" value="dictyBase"/>
</dbReference>
<dbReference type="GO" id="GO:0000281">
    <property type="term" value="P:mitotic cytokinesis"/>
    <property type="evidence" value="ECO:0000315"/>
    <property type="project" value="dictyBase"/>
</dbReference>
<dbReference type="GO" id="GO:0031037">
    <property type="term" value="P:myosin II filament disassembly"/>
    <property type="evidence" value="ECO:0000314"/>
    <property type="project" value="dictyBase"/>
</dbReference>
<dbReference type="CDD" id="cd16968">
    <property type="entry name" value="Alpha_kinase_MHCK_like"/>
    <property type="match status" value="1"/>
</dbReference>
<dbReference type="CDD" id="cd00200">
    <property type="entry name" value="WD40"/>
    <property type="match status" value="1"/>
</dbReference>
<dbReference type="DisProt" id="DP02959"/>
<dbReference type="FunFam" id="3.20.200.10:FF:000002">
    <property type="entry name" value="Eukaryotic elongation factor 2 kinase"/>
    <property type="match status" value="1"/>
</dbReference>
<dbReference type="FunFam" id="2.130.10.10:FF:003342">
    <property type="entry name" value="Myosin heavy chain kinase A"/>
    <property type="match status" value="1"/>
</dbReference>
<dbReference type="FunFam" id="3.30.200.20:FF:001299">
    <property type="entry name" value="Myosin heavy chain kinase A"/>
    <property type="match status" value="1"/>
</dbReference>
<dbReference type="Gene3D" id="3.20.200.10">
    <property type="entry name" value="MHCK/EF2 kinase"/>
    <property type="match status" value="1"/>
</dbReference>
<dbReference type="Gene3D" id="3.30.200.20">
    <property type="entry name" value="Phosphorylase Kinase, domain 1"/>
    <property type="match status" value="1"/>
</dbReference>
<dbReference type="Gene3D" id="2.130.10.10">
    <property type="entry name" value="YVTN repeat-like/Quinoprotein amine dehydrogenase"/>
    <property type="match status" value="2"/>
</dbReference>
<dbReference type="InterPro" id="IPR004166">
    <property type="entry name" value="a-kinase_dom"/>
</dbReference>
<dbReference type="InterPro" id="IPR051852">
    <property type="entry name" value="Alpha-type_PK"/>
</dbReference>
<dbReference type="InterPro" id="IPR020472">
    <property type="entry name" value="G-protein_beta_WD-40_rep"/>
</dbReference>
<dbReference type="InterPro" id="IPR011009">
    <property type="entry name" value="Kinase-like_dom_sf"/>
</dbReference>
<dbReference type="InterPro" id="IPR015943">
    <property type="entry name" value="WD40/YVTN_repeat-like_dom_sf"/>
</dbReference>
<dbReference type="InterPro" id="IPR019775">
    <property type="entry name" value="WD40_repeat_CS"/>
</dbReference>
<dbReference type="InterPro" id="IPR036322">
    <property type="entry name" value="WD40_repeat_dom_sf"/>
</dbReference>
<dbReference type="InterPro" id="IPR001680">
    <property type="entry name" value="WD40_rpt"/>
</dbReference>
<dbReference type="PANTHER" id="PTHR45992">
    <property type="entry name" value="EUKARYOTIC ELONGATION FACTOR 2 KINASE-RELATED"/>
    <property type="match status" value="1"/>
</dbReference>
<dbReference type="PANTHER" id="PTHR45992:SF8">
    <property type="entry name" value="MYOSIN HEAVY CHAIN KINASE A"/>
    <property type="match status" value="1"/>
</dbReference>
<dbReference type="Pfam" id="PF02816">
    <property type="entry name" value="Alpha_kinase"/>
    <property type="match status" value="1"/>
</dbReference>
<dbReference type="Pfam" id="PF00400">
    <property type="entry name" value="WD40"/>
    <property type="match status" value="7"/>
</dbReference>
<dbReference type="PRINTS" id="PR00320">
    <property type="entry name" value="GPROTEINBRPT"/>
</dbReference>
<dbReference type="SMART" id="SM00811">
    <property type="entry name" value="Alpha_kinase"/>
    <property type="match status" value="1"/>
</dbReference>
<dbReference type="SMART" id="SM00320">
    <property type="entry name" value="WD40"/>
    <property type="match status" value="7"/>
</dbReference>
<dbReference type="SUPFAM" id="SSF56112">
    <property type="entry name" value="Protein kinase-like (PK-like)"/>
    <property type="match status" value="1"/>
</dbReference>
<dbReference type="SUPFAM" id="SSF50978">
    <property type="entry name" value="WD40 repeat-like"/>
    <property type="match status" value="1"/>
</dbReference>
<dbReference type="PROSITE" id="PS51158">
    <property type="entry name" value="ALPHA_KINASE"/>
    <property type="match status" value="1"/>
</dbReference>
<dbReference type="PROSITE" id="PS00678">
    <property type="entry name" value="WD_REPEATS_1"/>
    <property type="match status" value="4"/>
</dbReference>
<dbReference type="PROSITE" id="PS50082">
    <property type="entry name" value="WD_REPEATS_2"/>
    <property type="match status" value="5"/>
</dbReference>
<dbReference type="PROSITE" id="PS50294">
    <property type="entry name" value="WD_REPEATS_REGION"/>
    <property type="match status" value="1"/>
</dbReference>
<reference key="1">
    <citation type="journal article" date="1995" name="J. Biol. Chem.">
        <title>Structural analysis of myosin heavy chain kinase A from Dictyostelium. Evidence for a highly divergent protein kinase domain, an amino-terminal coiled-coil domain, and a domain homologous to the beta-subunit of heterotrimeric G proteins.</title>
        <authorList>
            <person name="Futey L.M."/>
            <person name="Medley Q.G."/>
            <person name="Cote G.P."/>
            <person name="Egelhoff T.T."/>
        </authorList>
    </citation>
    <scope>NUCLEOTIDE SEQUENCE [MRNA]</scope>
    <scope>PARTIAL PROTEIN SEQUENCE</scope>
    <scope>FUNCTION</scope>
    <scope>CATALYTIC ACTIVITY</scope>
    <source>
        <strain>AX3</strain>
    </source>
</reference>
<reference key="2">
    <citation type="journal article" date="2005" name="Nature">
        <title>The genome of the social amoeba Dictyostelium discoideum.</title>
        <authorList>
            <person name="Eichinger L."/>
            <person name="Pachebat J.A."/>
            <person name="Gloeckner G."/>
            <person name="Rajandream M.A."/>
            <person name="Sucgang R."/>
            <person name="Berriman M."/>
            <person name="Song J."/>
            <person name="Olsen R."/>
            <person name="Szafranski K."/>
            <person name="Xu Q."/>
            <person name="Tunggal B."/>
            <person name="Kummerfeld S."/>
            <person name="Madera M."/>
            <person name="Konfortov B.A."/>
            <person name="Rivero F."/>
            <person name="Bankier A.T."/>
            <person name="Lehmann R."/>
            <person name="Hamlin N."/>
            <person name="Davies R."/>
            <person name="Gaudet P."/>
            <person name="Fey P."/>
            <person name="Pilcher K."/>
            <person name="Chen G."/>
            <person name="Saunders D."/>
            <person name="Sodergren E.J."/>
            <person name="Davis P."/>
            <person name="Kerhornou A."/>
            <person name="Nie X."/>
            <person name="Hall N."/>
            <person name="Anjard C."/>
            <person name="Hemphill L."/>
            <person name="Bason N."/>
            <person name="Farbrother P."/>
            <person name="Desany B."/>
            <person name="Just E."/>
            <person name="Morio T."/>
            <person name="Rost R."/>
            <person name="Churcher C.M."/>
            <person name="Cooper J."/>
            <person name="Haydock S."/>
            <person name="van Driessche N."/>
            <person name="Cronin A."/>
            <person name="Goodhead I."/>
            <person name="Muzny D.M."/>
            <person name="Mourier T."/>
            <person name="Pain A."/>
            <person name="Lu M."/>
            <person name="Harper D."/>
            <person name="Lindsay R."/>
            <person name="Hauser H."/>
            <person name="James K.D."/>
            <person name="Quiles M."/>
            <person name="Madan Babu M."/>
            <person name="Saito T."/>
            <person name="Buchrieser C."/>
            <person name="Wardroper A."/>
            <person name="Felder M."/>
            <person name="Thangavelu M."/>
            <person name="Johnson D."/>
            <person name="Knights A."/>
            <person name="Loulseged H."/>
            <person name="Mungall K.L."/>
            <person name="Oliver K."/>
            <person name="Price C."/>
            <person name="Quail M.A."/>
            <person name="Urushihara H."/>
            <person name="Hernandez J."/>
            <person name="Rabbinowitsch E."/>
            <person name="Steffen D."/>
            <person name="Sanders M."/>
            <person name="Ma J."/>
            <person name="Kohara Y."/>
            <person name="Sharp S."/>
            <person name="Simmonds M.N."/>
            <person name="Spiegler S."/>
            <person name="Tivey A."/>
            <person name="Sugano S."/>
            <person name="White B."/>
            <person name="Walker D."/>
            <person name="Woodward J.R."/>
            <person name="Winckler T."/>
            <person name="Tanaka Y."/>
            <person name="Shaulsky G."/>
            <person name="Schleicher M."/>
            <person name="Weinstock G.M."/>
            <person name="Rosenthal A."/>
            <person name="Cox E.C."/>
            <person name="Chisholm R.L."/>
            <person name="Gibbs R.A."/>
            <person name="Loomis W.F."/>
            <person name="Platzer M."/>
            <person name="Kay R.R."/>
            <person name="Williams J.G."/>
            <person name="Dear P.H."/>
            <person name="Noegel A.A."/>
            <person name="Barrell B.G."/>
            <person name="Kuspa A."/>
        </authorList>
    </citation>
    <scope>NUCLEOTIDE SEQUENCE [LARGE SCALE GENOMIC DNA]</scope>
    <source>
        <strain>AX4</strain>
    </source>
</reference>
<reference key="3">
    <citation type="journal article" date="1997" name="J. Biol. Chem.">
        <title>Mapping of the novel protein kinase catalytic domain of Dictyostelium myosin II heavy chain kinase A.</title>
        <authorList>
            <person name="Cote G.P."/>
            <person name="Luo X."/>
            <person name="Murphy M.B."/>
            <person name="Egelhoff T.T."/>
        </authorList>
    </citation>
    <scope>CHARACTERIZATION OF THE CATALYTIC DOMAIN</scope>
    <source>
        <strain>AX3</strain>
    </source>
</reference>
<protein>
    <recommendedName>
        <fullName>Myosin heavy chain kinase A</fullName>
        <shortName evidence="5">MHCK-A</shortName>
        <ecNumber evidence="4">2.7.11.7</ecNumber>
    </recommendedName>
</protein>
<keyword id="KW-0002">3D-structure</keyword>
<keyword id="KW-0067">ATP-binding</keyword>
<keyword id="KW-0175">Coiled coil</keyword>
<keyword id="KW-0903">Direct protein sequencing</keyword>
<keyword id="KW-0418">Kinase</keyword>
<keyword id="KW-0547">Nucleotide-binding</keyword>
<keyword id="KW-0597">Phosphoprotein</keyword>
<keyword id="KW-1185">Reference proteome</keyword>
<keyword id="KW-0677">Repeat</keyword>
<keyword id="KW-0723">Serine/threonine-protein kinase</keyword>
<keyword id="KW-0808">Transferase</keyword>
<keyword id="KW-0853">WD repeat</keyword>
<accession>P42527</accession>
<accession>Q54EX1</accession>